<evidence type="ECO:0000269" key="1">
    <source>
    </source>
</evidence>
<evidence type="ECO:0000269" key="2">
    <source>
    </source>
</evidence>
<evidence type="ECO:0000269" key="3">
    <source>
    </source>
</evidence>
<evidence type="ECO:0000305" key="4"/>
<evidence type="ECO:0007829" key="5">
    <source>
        <dbReference type="PDB" id="5L9W"/>
    </source>
</evidence>
<proteinExistence type="evidence at protein level"/>
<organism>
    <name type="scientific">Aromatoleum aromaticum (strain DSM 19018 / LMG 30748 / EbN1)</name>
    <name type="common">Azoarcus sp. (strain EbN1)</name>
    <dbReference type="NCBI Taxonomy" id="76114"/>
    <lineage>
        <taxon>Bacteria</taxon>
        <taxon>Pseudomonadati</taxon>
        <taxon>Pseudomonadota</taxon>
        <taxon>Betaproteobacteria</taxon>
        <taxon>Rhodocyclales</taxon>
        <taxon>Rhodocyclaceae</taxon>
        <taxon>Aromatoleum</taxon>
    </lineage>
</organism>
<comment type="function">
    <text evidence="3">Catalyzes the carboxylation of acetophenone to form 3-oxo-3-phenylpropanoate (benzoylacetate) in the anaerobic catabolism of ethylbenzene. Also carboxylates propiophenone at the same rate and 4-acetyl-pyridine at lower rates.</text>
</comment>
<comment type="catalytic activity">
    <reaction evidence="3">
        <text>acetophenone + hydrogencarbonate + 2 ATP + H2O = 3-oxo-3-phenylpropanoate + 2 ADP + 2 phosphate + 2 H(+)</text>
        <dbReference type="Rhea" id="RHEA:28647"/>
        <dbReference type="ChEBI" id="CHEBI:15377"/>
        <dbReference type="ChEBI" id="CHEBI:15378"/>
        <dbReference type="ChEBI" id="CHEBI:17544"/>
        <dbReference type="ChEBI" id="CHEBI:22731"/>
        <dbReference type="ChEBI" id="CHEBI:27632"/>
        <dbReference type="ChEBI" id="CHEBI:30616"/>
        <dbReference type="ChEBI" id="CHEBI:43474"/>
        <dbReference type="ChEBI" id="CHEBI:456216"/>
        <dbReference type="EC" id="6.4.1.8"/>
    </reaction>
</comment>
<comment type="cofactor">
    <cofactor evidence="3">
        <name>Mg(2+)</name>
        <dbReference type="ChEBI" id="CHEBI:18420"/>
    </cofactor>
    <cofactor evidence="3">
        <name>Mn(2+)</name>
        <dbReference type="ChEBI" id="CHEBI:29035"/>
    </cofactor>
    <text evidence="3">Divalent metal cations. Magnesium or manganese are required for activity.</text>
</comment>
<comment type="activity regulation">
    <text evidence="3">Inhibited by zinc ions, carbamoylphosphate and beta,gamma-imido-ATP.</text>
</comment>
<comment type="biophysicochemical properties">
    <kinetics>
        <KM evidence="3">33 uM for acetophone</KM>
        <KM evidence="3">0.54 mM for HCO(3)(-)</KM>
        <KM evidence="3">0.5 mM for ATP</KM>
        <Vmax evidence="3">51.0 mmol/min/mg enzyme</Vmax>
        <text>Kinetic parameters have been established using the heteromeric complex including recombinant Apc5.</text>
    </kinetics>
</comment>
<comment type="subunit">
    <text evidence="3">Acetophenone carboxylase consists of five subunits; a heterooctameric subcomplex of two alpha (Apc1), two beta (Apc2), two gamma (Apc3) and two delta (Apc4) subunits assembles with the epsilon (Apc5) subunit in an unknown stoichiometry.</text>
</comment>
<comment type="subcellular location">
    <subcellularLocation>
        <location evidence="4">Cytoplasm</location>
    </subcellularLocation>
</comment>
<comment type="induction">
    <text evidence="1 2">By ethylbenzene, toluene and acetophenone.</text>
</comment>
<comment type="similarity">
    <text evidence="4">Belongs to the oxoprolinase family.</text>
</comment>
<protein>
    <recommendedName>
        <fullName>Acetophenone carboxylase delta subunit</fullName>
        <ecNumber>6.4.1.8</ecNumber>
    </recommendedName>
    <alternativeName>
        <fullName>Acetophenone carboxylase 75 kDa subunit</fullName>
    </alternativeName>
</protein>
<feature type="initiator methionine" description="Removed" evidence="1">
    <location>
        <position position="1"/>
    </location>
</feature>
<feature type="chain" id="PRO_0000419041" description="Acetophenone carboxylase delta subunit">
    <location>
        <begin position="2"/>
        <end position="684"/>
    </location>
</feature>
<feature type="helix" evidence="5">
    <location>
        <begin position="6"/>
        <end position="13"/>
    </location>
</feature>
<feature type="helix" evidence="5">
    <location>
        <begin position="20"/>
        <end position="27"/>
    </location>
</feature>
<feature type="helix" evidence="5">
    <location>
        <begin position="31"/>
        <end position="53"/>
    </location>
</feature>
<feature type="helix" evidence="5">
    <location>
        <begin position="58"/>
        <end position="60"/>
    </location>
</feature>
<feature type="strand" evidence="5">
    <location>
        <begin position="66"/>
        <end position="72"/>
    </location>
</feature>
<feature type="strand" evidence="5">
    <location>
        <begin position="77"/>
        <end position="83"/>
    </location>
</feature>
<feature type="strand" evidence="5">
    <location>
        <begin position="88"/>
        <end position="90"/>
    </location>
</feature>
<feature type="helix" evidence="5">
    <location>
        <begin position="92"/>
        <end position="102"/>
    </location>
</feature>
<feature type="helix" evidence="5">
    <location>
        <begin position="103"/>
        <end position="105"/>
    </location>
</feature>
<feature type="strand" evidence="5">
    <location>
        <begin position="111"/>
        <end position="114"/>
    </location>
</feature>
<feature type="turn" evidence="5">
    <location>
        <begin position="117"/>
        <end position="119"/>
    </location>
</feature>
<feature type="strand" evidence="5">
    <location>
        <begin position="120"/>
        <end position="122"/>
    </location>
</feature>
<feature type="strand" evidence="5">
    <location>
        <begin position="126"/>
        <end position="135"/>
    </location>
</feature>
<feature type="strand" evidence="5">
    <location>
        <begin position="138"/>
        <end position="147"/>
    </location>
</feature>
<feature type="helix" evidence="5">
    <location>
        <begin position="167"/>
        <end position="169"/>
    </location>
</feature>
<feature type="strand" evidence="5">
    <location>
        <begin position="176"/>
        <end position="181"/>
    </location>
</feature>
<feature type="helix" evidence="5">
    <location>
        <begin position="187"/>
        <end position="197"/>
    </location>
</feature>
<feature type="helix" evidence="5">
    <location>
        <begin position="201"/>
        <end position="229"/>
    </location>
</feature>
<feature type="helix" evidence="5">
    <location>
        <begin position="231"/>
        <end position="254"/>
    </location>
</feature>
<feature type="strand" evidence="5">
    <location>
        <begin position="258"/>
        <end position="270"/>
    </location>
</feature>
<feature type="strand" evidence="5">
    <location>
        <begin position="273"/>
        <end position="287"/>
    </location>
</feature>
<feature type="strand" evidence="5">
    <location>
        <begin position="290"/>
        <end position="295"/>
    </location>
</feature>
<feature type="strand" evidence="5">
    <location>
        <begin position="303"/>
        <end position="305"/>
    </location>
</feature>
<feature type="helix" evidence="5">
    <location>
        <begin position="310"/>
        <end position="324"/>
    </location>
</feature>
<feature type="helix" evidence="5">
    <location>
        <begin position="333"/>
        <end position="336"/>
    </location>
</feature>
<feature type="strand" evidence="5">
    <location>
        <begin position="339"/>
        <end position="343"/>
    </location>
</feature>
<feature type="strand" evidence="5">
    <location>
        <begin position="345"/>
        <end position="347"/>
    </location>
</feature>
<feature type="helix" evidence="5">
    <location>
        <begin position="360"/>
        <end position="363"/>
    </location>
</feature>
<feature type="helix" evidence="5">
    <location>
        <begin position="365"/>
        <end position="379"/>
    </location>
</feature>
<feature type="helix" evidence="5">
    <location>
        <begin position="385"/>
        <end position="387"/>
    </location>
</feature>
<feature type="strand" evidence="5">
    <location>
        <begin position="399"/>
        <end position="404"/>
    </location>
</feature>
<feature type="strand" evidence="5">
    <location>
        <begin position="410"/>
        <end position="416"/>
    </location>
</feature>
<feature type="helix" evidence="5">
    <location>
        <begin position="417"/>
        <end position="419"/>
    </location>
</feature>
<feature type="strand" evidence="5">
    <location>
        <begin position="420"/>
        <end position="422"/>
    </location>
</feature>
<feature type="strand" evidence="5">
    <location>
        <begin position="439"/>
        <end position="441"/>
    </location>
</feature>
<feature type="helix" evidence="5">
    <location>
        <begin position="449"/>
        <end position="455"/>
    </location>
</feature>
<feature type="strand" evidence="5">
    <location>
        <begin position="456"/>
        <end position="459"/>
    </location>
</feature>
<feature type="strand" evidence="5">
    <location>
        <begin position="463"/>
        <end position="466"/>
    </location>
</feature>
<feature type="strand" evidence="5">
    <location>
        <begin position="473"/>
        <end position="475"/>
    </location>
</feature>
<feature type="strand" evidence="5">
    <location>
        <begin position="480"/>
        <end position="487"/>
    </location>
</feature>
<feature type="strand" evidence="5">
    <location>
        <begin position="489"/>
        <end position="497"/>
    </location>
</feature>
<feature type="strand" evidence="5">
    <location>
        <begin position="502"/>
        <end position="504"/>
    </location>
</feature>
<feature type="strand" evidence="5">
    <location>
        <begin position="510"/>
        <end position="512"/>
    </location>
</feature>
<feature type="strand" evidence="5">
    <location>
        <begin position="521"/>
        <end position="525"/>
    </location>
</feature>
<feature type="helix" evidence="5">
    <location>
        <begin position="529"/>
        <end position="534"/>
    </location>
</feature>
<feature type="helix" evidence="5">
    <location>
        <begin position="544"/>
        <end position="549"/>
    </location>
</feature>
<feature type="strand" evidence="5">
    <location>
        <begin position="555"/>
        <end position="560"/>
    </location>
</feature>
<feature type="strand" evidence="5">
    <location>
        <begin position="564"/>
        <end position="570"/>
    </location>
</feature>
<feature type="strand" evidence="5">
    <location>
        <begin position="573"/>
        <end position="579"/>
    </location>
</feature>
<feature type="helix" evidence="5">
    <location>
        <begin position="589"/>
        <end position="591"/>
    </location>
</feature>
<feature type="helix" evidence="5">
    <location>
        <begin position="594"/>
        <end position="602"/>
    </location>
</feature>
<feature type="helix" evidence="5">
    <location>
        <begin position="608"/>
        <end position="615"/>
    </location>
</feature>
<feature type="strand" evidence="5">
    <location>
        <begin position="623"/>
        <end position="625"/>
    </location>
</feature>
<feature type="helix" evidence="5">
    <location>
        <begin position="629"/>
        <end position="645"/>
    </location>
</feature>
<feature type="helix" evidence="5">
    <location>
        <begin position="649"/>
        <end position="656"/>
    </location>
</feature>
<feature type="helix" evidence="5">
    <location>
        <begin position="664"/>
        <end position="666"/>
    </location>
</feature>
<feature type="strand" evidence="5">
    <location>
        <begin position="667"/>
        <end position="669"/>
    </location>
</feature>
<feature type="turn" evidence="5">
    <location>
        <begin position="672"/>
        <end position="674"/>
    </location>
</feature>
<name>APCD_AROAE</name>
<dbReference type="EC" id="6.4.1.8"/>
<dbReference type="EMBL" id="CR555306">
    <property type="protein sequence ID" value="CAI07447.1"/>
    <property type="molecule type" value="Genomic_DNA"/>
</dbReference>
<dbReference type="RefSeq" id="WP_011237167.1">
    <property type="nucleotide sequence ID" value="NC_006513.1"/>
</dbReference>
<dbReference type="PDB" id="5L9W">
    <property type="method" value="X-ray"/>
    <property type="resolution" value="2.90 A"/>
    <property type="chains" value="A=1-684"/>
</dbReference>
<dbReference type="PDBsum" id="5L9W"/>
<dbReference type="SMR" id="Q5P5G5"/>
<dbReference type="STRING" id="76114.c1A100"/>
<dbReference type="KEGG" id="eba:c1A100"/>
<dbReference type="eggNOG" id="COG0146">
    <property type="taxonomic scope" value="Bacteria"/>
</dbReference>
<dbReference type="HOGENOM" id="CLU_020413_2_0_4"/>
<dbReference type="OrthoDB" id="8612863at2"/>
<dbReference type="BioCyc" id="MetaCyc:MONOMER-14363"/>
<dbReference type="BRENDA" id="6.4.1.8">
    <property type="organism ID" value="12182"/>
</dbReference>
<dbReference type="Proteomes" id="UP000006552">
    <property type="component" value="Chromosome"/>
</dbReference>
<dbReference type="GO" id="GO:0005829">
    <property type="term" value="C:cytosol"/>
    <property type="evidence" value="ECO:0007669"/>
    <property type="project" value="TreeGrafter"/>
</dbReference>
<dbReference type="GO" id="GO:0017168">
    <property type="term" value="F:5-oxoprolinase (ATP-hydrolyzing) activity"/>
    <property type="evidence" value="ECO:0007669"/>
    <property type="project" value="TreeGrafter"/>
</dbReference>
<dbReference type="GO" id="GO:0005524">
    <property type="term" value="F:ATP binding"/>
    <property type="evidence" value="ECO:0007669"/>
    <property type="project" value="UniProtKB-KW"/>
</dbReference>
<dbReference type="GO" id="GO:0016874">
    <property type="term" value="F:ligase activity"/>
    <property type="evidence" value="ECO:0007669"/>
    <property type="project" value="UniProtKB-KW"/>
</dbReference>
<dbReference type="GO" id="GO:0006749">
    <property type="term" value="P:glutathione metabolic process"/>
    <property type="evidence" value="ECO:0007669"/>
    <property type="project" value="TreeGrafter"/>
</dbReference>
<dbReference type="InterPro" id="IPR049999">
    <property type="entry name" value="ApcD"/>
</dbReference>
<dbReference type="InterPro" id="IPR003692">
    <property type="entry name" value="Hydantoinase_B"/>
</dbReference>
<dbReference type="InterPro" id="IPR045079">
    <property type="entry name" value="Oxoprolinase-like"/>
</dbReference>
<dbReference type="NCBIfam" id="NF042976">
    <property type="entry name" value="AcphenoCarb_ApcD"/>
    <property type="match status" value="1"/>
</dbReference>
<dbReference type="PANTHER" id="PTHR11365">
    <property type="entry name" value="5-OXOPROLINASE RELATED"/>
    <property type="match status" value="1"/>
</dbReference>
<dbReference type="PANTHER" id="PTHR11365:SF23">
    <property type="entry name" value="HYPOTHETICAL 5-OXOPROLINASE (EUROFUNG)-RELATED"/>
    <property type="match status" value="1"/>
</dbReference>
<dbReference type="Pfam" id="PF02538">
    <property type="entry name" value="Hydantoinase_B"/>
    <property type="match status" value="1"/>
</dbReference>
<keyword id="KW-0002">3D-structure</keyword>
<keyword id="KW-0067">ATP-binding</keyword>
<keyword id="KW-0963">Cytoplasm</keyword>
<keyword id="KW-0903">Direct protein sequencing</keyword>
<keyword id="KW-0436">Ligase</keyword>
<keyword id="KW-0547">Nucleotide-binding</keyword>
<keyword id="KW-1185">Reference proteome</keyword>
<reference key="1">
    <citation type="journal article" date="2005" name="Arch. Microbiol.">
        <title>The genome sequence of an anaerobic aromatic-degrading denitrifying bacterium, strain EbN1.</title>
        <authorList>
            <person name="Rabus R."/>
            <person name="Kube M."/>
            <person name="Heider J."/>
            <person name="Beck A."/>
            <person name="Heitmann K."/>
            <person name="Widdel F."/>
            <person name="Reinhardt R."/>
        </authorList>
    </citation>
    <scope>NUCLEOTIDE SEQUENCE [LARGE SCALE GENOMIC DNA]</scope>
    <source>
        <strain>DSM 19018 / LMG 30748 / EbN1</strain>
    </source>
</reference>
<reference key="2">
    <citation type="journal article" date="1999" name="J. Mol. Microbiol. Biotechnol.">
        <title>Anaerobic degradation of ethylbenzene and toluene in denitrifying strain EbN1 proceeds via independent substrate-induced pathways.</title>
        <authorList>
            <person name="Champion K.M."/>
            <person name="Zengler K."/>
            <person name="Rabus R."/>
        </authorList>
    </citation>
    <scope>PROTEIN SEQUENCE OF 2-29</scope>
    <scope>INDUCTION</scope>
</reference>
<reference key="3">
    <citation type="journal article" date="2002" name="Arch. Microbiol.">
        <title>Genes involved in the anaerobic degradation of ethylbenzene in a denitrifying bacterium, strain EbN1.</title>
        <authorList>
            <person name="Rabus R."/>
            <person name="Kube M."/>
            <person name="Beck A."/>
            <person name="Widdel F."/>
            <person name="Reinhardt R."/>
        </authorList>
    </citation>
    <scope>IDENTIFICATION</scope>
</reference>
<reference key="4">
    <citation type="journal article" date="2005" name="J. Bacteriol.">
        <title>Substrate-dependent regulation of anaerobic degradation pathways for toluene and ethylbenzene in a denitrifying bacterium, strain EbN1.</title>
        <authorList>
            <person name="Kuhner S."/>
            <person name="Wohlbrand L."/>
            <person name="Fritz I."/>
            <person name="Wruck W."/>
            <person name="Hultschig C."/>
            <person name="Hufnagel P."/>
            <person name="Kube M."/>
            <person name="Reinhardt R."/>
            <person name="Rabus R."/>
        </authorList>
    </citation>
    <scope>INDUCTION</scope>
    <scope>IDENTIFICATION BY MASS SPECTROMETRY</scope>
</reference>
<reference key="5">
    <citation type="journal article" date="2010" name="J. Bacteriol.">
        <title>ATP-dependent carboxylation of acetophenone by a novel type of carboxylase.</title>
        <authorList>
            <person name="Jobst B."/>
            <person name="Schuhle K."/>
            <person name="Linne U."/>
            <person name="Heider J."/>
        </authorList>
    </citation>
    <scope>FUNCTION</scope>
    <scope>CATALYTIC ACTIVITY</scope>
    <scope>ACTIVITY REGULATION</scope>
    <scope>BIOPHYSICOCHEMICAL PROPERTIES</scope>
    <scope>COFACTOR</scope>
    <scope>SUBUNIT</scope>
</reference>
<accession>Q5P5G5</accession>
<sequence>MAIPTLEQKLTWLKPAPASSRELDLAAQIDPAQFEIGFQRTNDILDEGMDVFVRSCRCAMGVAGDSLVAIMTADGDIVNGSCGTYLHAVIPPLIIKYILETYGDEIRDGDLWFANDAVYGGVHNPDQMVCMPVYYEGKLVAWTAALVHTTETGAIEPGGMPVSATTRFEEGMNLPPMRIGENFKLREDVVSMFVAFGLRAPSMIAVDLKARCTTADRVRTRIIELCEREGADYVTGLFRKMLQVAEAGARELIEQWPDGKYRCVTFSDAVGLKQGLVRSCYMTLEKKGDRMLVDLSETGPETPSPYNAHPQAAIAHFSNYIYEYLFHSLPISNGTFANIDFKFGKNTCLSPDPRAATSCSVMISTGVMSAVHNACAKAMFSTSLWKQSGASMGNGGNALVLAGQNQWGSSFADMLAYSINTEGQGARPTEDGMDAFGFPWCVFGRAPNTESVENEFPLLVPLSNHWKDSCGHGKYRGGVGTAQVWVAHHVPELYMMAIADNTKLQTPQPLFGGYAPCTVPGIGIRNANIKELMAEGSDKIKLDVETLLAERTIDGKYEIEFQGRSVRPYSNGEVVTFAFSCGGTGYGDPLDRDPKSVEVDLLKGVLTEQTAQNIYKVKWDANLRRVDLDETSRLRAAEHDARRKRGVPYEQFEREWLKQRPDDEILKYYGTWPDAKVAQPLLRA</sequence>
<gene>
    <name type="primary">apc4</name>
    <name type="synonym">apcD</name>
    <name type="ordered locus">AZOSEA13220</name>
    <name type="ORF">c1A100</name>
</gene>